<feature type="initiator methionine" description="Removed" evidence="2">
    <location>
        <position position="1"/>
    </location>
</feature>
<feature type="chain" id="PRO_0000090967" description="Elongation factor 1-alpha">
    <location>
        <begin position="2"/>
        <end position="460"/>
    </location>
</feature>
<feature type="domain" description="tr-type G">
    <location>
        <begin position="5"/>
        <end position="240"/>
    </location>
</feature>
<feature type="region of interest" description="G1" evidence="1">
    <location>
        <begin position="14"/>
        <end position="21"/>
    </location>
</feature>
<feature type="region of interest" description="G2" evidence="1">
    <location>
        <begin position="70"/>
        <end position="74"/>
    </location>
</feature>
<feature type="region of interest" description="G3" evidence="1">
    <location>
        <begin position="91"/>
        <end position="94"/>
    </location>
</feature>
<feature type="region of interest" description="G4" evidence="1">
    <location>
        <begin position="153"/>
        <end position="156"/>
    </location>
</feature>
<feature type="region of interest" description="G5" evidence="1">
    <location>
        <begin position="192"/>
        <end position="194"/>
    </location>
</feature>
<feature type="binding site" evidence="1">
    <location>
        <begin position="14"/>
        <end position="21"/>
    </location>
    <ligand>
        <name>GTP</name>
        <dbReference type="ChEBI" id="CHEBI:37565"/>
    </ligand>
</feature>
<feature type="binding site" evidence="1">
    <location>
        <begin position="91"/>
        <end position="95"/>
    </location>
    <ligand>
        <name>GTP</name>
        <dbReference type="ChEBI" id="CHEBI:37565"/>
    </ligand>
</feature>
<feature type="binding site" evidence="1">
    <location>
        <begin position="153"/>
        <end position="156"/>
    </location>
    <ligand>
        <name>GTP</name>
        <dbReference type="ChEBI" id="CHEBI:37565"/>
    </ligand>
</feature>
<feature type="modified residue" description="N,N,N-trimethylglycine" evidence="2">
    <location>
        <position position="2"/>
    </location>
</feature>
<feature type="modified residue" description="N6,N6-dimethyllysine; alternate" evidence="2">
    <location>
        <position position="3"/>
    </location>
</feature>
<feature type="modified residue" description="N6-methyllysine; alternate" evidence="2">
    <location>
        <position position="3"/>
    </location>
</feature>
<feature type="modified residue" description="N6-methyllysine" evidence="2">
    <location>
        <position position="30"/>
    </location>
</feature>
<feature type="modified residue" description="N6,N6,N6-trimethyllysine" evidence="2">
    <location>
        <position position="79"/>
    </location>
</feature>
<feature type="modified residue" description="N6,N6-dimethyllysine; alternate" evidence="2">
    <location>
        <position position="316"/>
    </location>
</feature>
<feature type="modified residue" description="N6-methyllysine; alternate" evidence="2">
    <location>
        <position position="316"/>
    </location>
</feature>
<feature type="modified residue" description="N6-methyllysine" evidence="2">
    <location>
        <position position="390"/>
    </location>
</feature>
<dbReference type="EMBL" id="X94913">
    <property type="protein sequence ID" value="CAA64399.1"/>
    <property type="molecule type" value="Genomic_DNA"/>
</dbReference>
<dbReference type="SMR" id="O42820"/>
<dbReference type="VEuPathDB" id="FungiDB:SCHCODRAFT_02611788"/>
<dbReference type="GO" id="GO:0005737">
    <property type="term" value="C:cytoplasm"/>
    <property type="evidence" value="ECO:0007669"/>
    <property type="project" value="UniProtKB-SubCell"/>
</dbReference>
<dbReference type="GO" id="GO:0005525">
    <property type="term" value="F:GTP binding"/>
    <property type="evidence" value="ECO:0007669"/>
    <property type="project" value="UniProtKB-KW"/>
</dbReference>
<dbReference type="GO" id="GO:0003924">
    <property type="term" value="F:GTPase activity"/>
    <property type="evidence" value="ECO:0007669"/>
    <property type="project" value="InterPro"/>
</dbReference>
<dbReference type="GO" id="GO:0003746">
    <property type="term" value="F:translation elongation factor activity"/>
    <property type="evidence" value="ECO:0007669"/>
    <property type="project" value="UniProtKB-KW"/>
</dbReference>
<dbReference type="CDD" id="cd01883">
    <property type="entry name" value="EF1_alpha"/>
    <property type="match status" value="1"/>
</dbReference>
<dbReference type="CDD" id="cd03693">
    <property type="entry name" value="EF1_alpha_II"/>
    <property type="match status" value="1"/>
</dbReference>
<dbReference type="CDD" id="cd03705">
    <property type="entry name" value="EF1_alpha_III"/>
    <property type="match status" value="1"/>
</dbReference>
<dbReference type="FunFam" id="2.40.30.10:FF:000003">
    <property type="entry name" value="Elongation factor 1-alpha"/>
    <property type="match status" value="1"/>
</dbReference>
<dbReference type="FunFam" id="2.40.30.10:FF:000005">
    <property type="entry name" value="Elongation factor 1-alpha"/>
    <property type="match status" value="1"/>
</dbReference>
<dbReference type="FunFam" id="3.40.50.300:FF:000211">
    <property type="entry name" value="Elongation factor 1-alpha"/>
    <property type="match status" value="1"/>
</dbReference>
<dbReference type="Gene3D" id="3.40.50.300">
    <property type="entry name" value="P-loop containing nucleotide triphosphate hydrolases"/>
    <property type="match status" value="1"/>
</dbReference>
<dbReference type="Gene3D" id="2.40.30.10">
    <property type="entry name" value="Translation factors"/>
    <property type="match status" value="2"/>
</dbReference>
<dbReference type="HAMAP" id="MF_00118_A">
    <property type="entry name" value="EF_Tu_A"/>
    <property type="match status" value="1"/>
</dbReference>
<dbReference type="InterPro" id="IPR004161">
    <property type="entry name" value="EFTu-like_2"/>
</dbReference>
<dbReference type="InterPro" id="IPR031157">
    <property type="entry name" value="G_TR_CS"/>
</dbReference>
<dbReference type="InterPro" id="IPR054696">
    <property type="entry name" value="GTP-eEF1A_C"/>
</dbReference>
<dbReference type="InterPro" id="IPR027417">
    <property type="entry name" value="P-loop_NTPase"/>
</dbReference>
<dbReference type="InterPro" id="IPR000795">
    <property type="entry name" value="T_Tr_GTP-bd_dom"/>
</dbReference>
<dbReference type="InterPro" id="IPR050100">
    <property type="entry name" value="TRAFAC_GTPase_members"/>
</dbReference>
<dbReference type="InterPro" id="IPR009000">
    <property type="entry name" value="Transl_B-barrel_sf"/>
</dbReference>
<dbReference type="InterPro" id="IPR009001">
    <property type="entry name" value="Transl_elong_EF1A/Init_IF2_C"/>
</dbReference>
<dbReference type="InterPro" id="IPR004539">
    <property type="entry name" value="Transl_elong_EF1A_euk/arc"/>
</dbReference>
<dbReference type="NCBIfam" id="TIGR00483">
    <property type="entry name" value="EF-1_alpha"/>
    <property type="match status" value="1"/>
</dbReference>
<dbReference type="NCBIfam" id="NF008969">
    <property type="entry name" value="PRK12317.1"/>
    <property type="match status" value="1"/>
</dbReference>
<dbReference type="PANTHER" id="PTHR23115">
    <property type="entry name" value="TRANSLATION FACTOR"/>
    <property type="match status" value="1"/>
</dbReference>
<dbReference type="Pfam" id="PF22594">
    <property type="entry name" value="GTP-eEF1A_C"/>
    <property type="match status" value="1"/>
</dbReference>
<dbReference type="Pfam" id="PF00009">
    <property type="entry name" value="GTP_EFTU"/>
    <property type="match status" value="1"/>
</dbReference>
<dbReference type="Pfam" id="PF03144">
    <property type="entry name" value="GTP_EFTU_D2"/>
    <property type="match status" value="1"/>
</dbReference>
<dbReference type="PRINTS" id="PR00315">
    <property type="entry name" value="ELONGATNFCT"/>
</dbReference>
<dbReference type="SUPFAM" id="SSF50465">
    <property type="entry name" value="EF-Tu/eEF-1alpha/eIF2-gamma C-terminal domain"/>
    <property type="match status" value="1"/>
</dbReference>
<dbReference type="SUPFAM" id="SSF52540">
    <property type="entry name" value="P-loop containing nucleoside triphosphate hydrolases"/>
    <property type="match status" value="1"/>
</dbReference>
<dbReference type="SUPFAM" id="SSF50447">
    <property type="entry name" value="Translation proteins"/>
    <property type="match status" value="1"/>
</dbReference>
<dbReference type="PROSITE" id="PS00301">
    <property type="entry name" value="G_TR_1"/>
    <property type="match status" value="1"/>
</dbReference>
<dbReference type="PROSITE" id="PS51722">
    <property type="entry name" value="G_TR_2"/>
    <property type="match status" value="1"/>
</dbReference>
<sequence length="460" mass="50134">MGKEKLHVNVVVIGHVDSGKSTTTGHLIYKCGGIDKRTIEKFEKEAAELGKGSFKYAWVLDKLKAERERGITIDIALWKFETPKYMVTVIDAPGHRDFIKNMITGTSQADCAILTIAGGTGEFEAGISKDGQTREHALLAFTLGVRQLIVAVNKMDTTKWSEDRFNEIVKETSTFIKKVGYNPKTVAFVPISGWHGDNMLEESTNMPWYKGWTKETKAGVVKGKTLLDAIDAIEPPVRPSDKPLRLPLQDVYKIGGIGTVPVGRVETGIIKAGMVVTFAPSNVTTEVKSVEMHHEQLAEGKPGDNVGFNVKNVSVKDIRRGNVASDSKNDPAKEAASFNAQVIVLNHPGQIGAGYAPVLDCHTAHIACKFAELLEKIDRRTGKSLEASPKFVKSGDACIVKLVPSKPMCVESYNEYPPLGRFAVRDMRQTVAVGIIKSVDKTDKSGGKVTKSAEKAAKKK</sequence>
<evidence type="ECO:0000250" key="1"/>
<evidence type="ECO:0000250" key="2">
    <source>
        <dbReference type="UniProtKB" id="P02994"/>
    </source>
</evidence>
<evidence type="ECO:0000305" key="3"/>
<comment type="function">
    <text>This protein promotes the GTP-dependent binding of aminoacyl-tRNA to the A-site of ribosomes during protein biosynthesis.</text>
</comment>
<comment type="subcellular location">
    <subcellularLocation>
        <location>Cytoplasm</location>
    </subcellularLocation>
</comment>
<comment type="similarity">
    <text evidence="3">Belongs to the TRAFAC class translation factor GTPase superfamily. Classic translation factor GTPase family. EF-Tu/EF-1A subfamily.</text>
</comment>
<accession>O42820</accession>
<name>EF1A_SCHCO</name>
<organism>
    <name type="scientific">Schizophyllum commune</name>
    <name type="common">Split gill fungus</name>
    <dbReference type="NCBI Taxonomy" id="5334"/>
    <lineage>
        <taxon>Eukaryota</taxon>
        <taxon>Fungi</taxon>
        <taxon>Dikarya</taxon>
        <taxon>Basidiomycota</taxon>
        <taxon>Agaricomycotina</taxon>
        <taxon>Agaricomycetes</taxon>
        <taxon>Agaricomycetidae</taxon>
        <taxon>Agaricales</taxon>
        <taxon>Schizophyllaceae</taxon>
        <taxon>Schizophyllum</taxon>
    </lineage>
</organism>
<protein>
    <recommendedName>
        <fullName>Elongation factor 1-alpha</fullName>
        <shortName>EF-1-alpha</shortName>
    </recommendedName>
</protein>
<reference key="1">
    <citation type="journal article" date="1997" name="Mycol. Res.">
        <title>The translation elongation factor 1a (EF1a) of Schizophyllum commune.</title>
        <authorList>
            <person name="Wendland J."/>
            <person name="Kothe E."/>
        </authorList>
        <dbReference type="AGRICOLA" id="IND20621282"/>
    </citation>
    <scope>NUCLEOTIDE SEQUENCE [GENOMIC DNA]</scope>
    <source>
        <strain>1-40</strain>
    </source>
</reference>
<proteinExistence type="inferred from homology"/>
<keyword id="KW-0963">Cytoplasm</keyword>
<keyword id="KW-0251">Elongation factor</keyword>
<keyword id="KW-0342">GTP-binding</keyword>
<keyword id="KW-0488">Methylation</keyword>
<keyword id="KW-0547">Nucleotide-binding</keyword>
<keyword id="KW-0648">Protein biosynthesis</keyword>
<gene>
    <name type="primary">TEF1</name>
</gene>